<feature type="chain" id="PRO_1000199961" description="Endoribonuclease YbeY">
    <location>
        <begin position="1"/>
        <end position="177"/>
    </location>
</feature>
<feature type="region of interest" description="Disordered" evidence="2">
    <location>
        <begin position="154"/>
        <end position="177"/>
    </location>
</feature>
<feature type="compositionally biased region" description="Polar residues" evidence="2">
    <location>
        <begin position="168"/>
        <end position="177"/>
    </location>
</feature>
<feature type="binding site" evidence="1">
    <location>
        <position position="114"/>
    </location>
    <ligand>
        <name>Zn(2+)</name>
        <dbReference type="ChEBI" id="CHEBI:29105"/>
        <note>catalytic</note>
    </ligand>
</feature>
<feature type="binding site" evidence="1">
    <location>
        <position position="118"/>
    </location>
    <ligand>
        <name>Zn(2+)</name>
        <dbReference type="ChEBI" id="CHEBI:29105"/>
        <note>catalytic</note>
    </ligand>
</feature>
<feature type="binding site" evidence="1">
    <location>
        <position position="124"/>
    </location>
    <ligand>
        <name>Zn(2+)</name>
        <dbReference type="ChEBI" id="CHEBI:29105"/>
        <note>catalytic</note>
    </ligand>
</feature>
<gene>
    <name evidence="1" type="primary">ybeY</name>
    <name type="ordered locus">CJA_1637</name>
</gene>
<reference key="1">
    <citation type="journal article" date="2008" name="J. Bacteriol.">
        <title>Insights into plant cell wall degradation from the genome sequence of the soil bacterium Cellvibrio japonicus.</title>
        <authorList>
            <person name="DeBoy R.T."/>
            <person name="Mongodin E.F."/>
            <person name="Fouts D.E."/>
            <person name="Tailford L.E."/>
            <person name="Khouri H."/>
            <person name="Emerson J.B."/>
            <person name="Mohamoud Y."/>
            <person name="Watkins K."/>
            <person name="Henrissat B."/>
            <person name="Gilbert H.J."/>
            <person name="Nelson K.E."/>
        </authorList>
    </citation>
    <scope>NUCLEOTIDE SEQUENCE [LARGE SCALE GENOMIC DNA]</scope>
    <source>
        <strain>Ueda107</strain>
    </source>
</reference>
<keyword id="KW-0963">Cytoplasm</keyword>
<keyword id="KW-0255">Endonuclease</keyword>
<keyword id="KW-0378">Hydrolase</keyword>
<keyword id="KW-0479">Metal-binding</keyword>
<keyword id="KW-0540">Nuclease</keyword>
<keyword id="KW-1185">Reference proteome</keyword>
<keyword id="KW-0690">Ribosome biogenesis</keyword>
<keyword id="KW-0698">rRNA processing</keyword>
<keyword id="KW-0862">Zinc</keyword>
<accession>B3PER3</accession>
<comment type="function">
    <text evidence="1">Single strand-specific metallo-endoribonuclease involved in late-stage 70S ribosome quality control and in maturation of the 3' terminus of the 16S rRNA.</text>
</comment>
<comment type="cofactor">
    <cofactor evidence="1">
        <name>Zn(2+)</name>
        <dbReference type="ChEBI" id="CHEBI:29105"/>
    </cofactor>
    <text evidence="1">Binds 1 zinc ion.</text>
</comment>
<comment type="subcellular location">
    <subcellularLocation>
        <location evidence="1">Cytoplasm</location>
    </subcellularLocation>
</comment>
<comment type="similarity">
    <text evidence="1">Belongs to the endoribonuclease YbeY family.</text>
</comment>
<proteinExistence type="inferred from homology"/>
<name>YBEY_CELJU</name>
<evidence type="ECO:0000255" key="1">
    <source>
        <dbReference type="HAMAP-Rule" id="MF_00009"/>
    </source>
</evidence>
<evidence type="ECO:0000256" key="2">
    <source>
        <dbReference type="SAM" id="MobiDB-lite"/>
    </source>
</evidence>
<protein>
    <recommendedName>
        <fullName evidence="1">Endoribonuclease YbeY</fullName>
        <ecNumber evidence="1">3.1.-.-</ecNumber>
    </recommendedName>
</protein>
<sequence>MSKYQIDIEINSASQQLPSEEHIRQWISTALDSQQLDEAEVSVYIVDTDEGRDLNREYRERDYATNVLSFPADIPPEVEIPLLGDLVVCAPVVEHEADEQHKPLDAHWAHMLIHGSLHLLGYDHIDNDEAETMEALETQLLARLGYADPYDEASYPEAIPTNPAPRRQASSSAGHIE</sequence>
<dbReference type="EC" id="3.1.-.-" evidence="1"/>
<dbReference type="EMBL" id="CP000934">
    <property type="protein sequence ID" value="ACE83072.1"/>
    <property type="molecule type" value="Genomic_DNA"/>
</dbReference>
<dbReference type="RefSeq" id="WP_012487261.1">
    <property type="nucleotide sequence ID" value="NC_010995.1"/>
</dbReference>
<dbReference type="SMR" id="B3PER3"/>
<dbReference type="STRING" id="498211.CJA_1637"/>
<dbReference type="KEGG" id="cja:CJA_1637"/>
<dbReference type="eggNOG" id="COG0319">
    <property type="taxonomic scope" value="Bacteria"/>
</dbReference>
<dbReference type="HOGENOM" id="CLU_106710_0_1_6"/>
<dbReference type="OrthoDB" id="9807740at2"/>
<dbReference type="Proteomes" id="UP000001036">
    <property type="component" value="Chromosome"/>
</dbReference>
<dbReference type="GO" id="GO:0005737">
    <property type="term" value="C:cytoplasm"/>
    <property type="evidence" value="ECO:0007669"/>
    <property type="project" value="UniProtKB-SubCell"/>
</dbReference>
<dbReference type="GO" id="GO:0004222">
    <property type="term" value="F:metalloendopeptidase activity"/>
    <property type="evidence" value="ECO:0007669"/>
    <property type="project" value="InterPro"/>
</dbReference>
<dbReference type="GO" id="GO:0004521">
    <property type="term" value="F:RNA endonuclease activity"/>
    <property type="evidence" value="ECO:0007669"/>
    <property type="project" value="UniProtKB-UniRule"/>
</dbReference>
<dbReference type="GO" id="GO:0008270">
    <property type="term" value="F:zinc ion binding"/>
    <property type="evidence" value="ECO:0007669"/>
    <property type="project" value="UniProtKB-UniRule"/>
</dbReference>
<dbReference type="GO" id="GO:0006364">
    <property type="term" value="P:rRNA processing"/>
    <property type="evidence" value="ECO:0007669"/>
    <property type="project" value="UniProtKB-UniRule"/>
</dbReference>
<dbReference type="Gene3D" id="3.40.390.30">
    <property type="entry name" value="Metalloproteases ('zincins'), catalytic domain"/>
    <property type="match status" value="1"/>
</dbReference>
<dbReference type="HAMAP" id="MF_00009">
    <property type="entry name" value="Endoribonucl_YbeY"/>
    <property type="match status" value="1"/>
</dbReference>
<dbReference type="InterPro" id="IPR023091">
    <property type="entry name" value="MetalPrtase_cat_dom_sf_prd"/>
</dbReference>
<dbReference type="InterPro" id="IPR002036">
    <property type="entry name" value="YbeY"/>
</dbReference>
<dbReference type="InterPro" id="IPR020549">
    <property type="entry name" value="YbeY_CS"/>
</dbReference>
<dbReference type="NCBIfam" id="TIGR00043">
    <property type="entry name" value="rRNA maturation RNase YbeY"/>
    <property type="match status" value="1"/>
</dbReference>
<dbReference type="PANTHER" id="PTHR46986">
    <property type="entry name" value="ENDORIBONUCLEASE YBEY, CHLOROPLASTIC"/>
    <property type="match status" value="1"/>
</dbReference>
<dbReference type="PANTHER" id="PTHR46986:SF1">
    <property type="entry name" value="ENDORIBONUCLEASE YBEY, CHLOROPLASTIC"/>
    <property type="match status" value="1"/>
</dbReference>
<dbReference type="Pfam" id="PF02130">
    <property type="entry name" value="YbeY"/>
    <property type="match status" value="1"/>
</dbReference>
<dbReference type="SUPFAM" id="SSF55486">
    <property type="entry name" value="Metalloproteases ('zincins'), catalytic domain"/>
    <property type="match status" value="1"/>
</dbReference>
<dbReference type="PROSITE" id="PS01306">
    <property type="entry name" value="UPF0054"/>
    <property type="match status" value="1"/>
</dbReference>
<organism>
    <name type="scientific">Cellvibrio japonicus (strain Ueda107)</name>
    <name type="common">Pseudomonas fluorescens subsp. cellulosa</name>
    <dbReference type="NCBI Taxonomy" id="498211"/>
    <lineage>
        <taxon>Bacteria</taxon>
        <taxon>Pseudomonadati</taxon>
        <taxon>Pseudomonadota</taxon>
        <taxon>Gammaproteobacteria</taxon>
        <taxon>Cellvibrionales</taxon>
        <taxon>Cellvibrionaceae</taxon>
        <taxon>Cellvibrio</taxon>
    </lineage>
</organism>